<protein>
    <recommendedName>
        <fullName>Uncharacterized protein in LEF8-FP intergenic region</fullName>
    </recommendedName>
    <alternativeName>
        <fullName>ORF59</fullName>
    </alternativeName>
</protein>
<sequence length="71" mass="8761">MRERFQYNKAIVMFYLNEVLLKEEMPARARRLFIETFRKYHKLDGGDENIALHLAFKAVERRYVKLNNRWI</sequence>
<accession>Q90177</accession>
<feature type="chain" id="PRO_0000132998" description="Uncharacterized protein in LEF8-FP intergenic region">
    <location>
        <begin position="1"/>
        <end position="71" status="greater than"/>
    </location>
</feature>
<feature type="non-terminal residue">
    <location>
        <position position="71"/>
    </location>
</feature>
<reference key="1">
    <citation type="journal article" date="1996" name="J. Gen. Virol.">
        <title>Characterization of the Lymantria dispar nucleopolyhedrovirus 25K FP gene.</title>
        <authorList>
            <person name="Bischoff D.S."/>
            <person name="Slavicek J.M."/>
        </authorList>
    </citation>
    <scope>NUCLEOTIDE SEQUENCE [GENOMIC DNA]</scope>
</reference>
<proteinExistence type="predicted"/>
<organismHost>
    <name type="scientific">Lepidoptera</name>
    <name type="common">butterflies and moths</name>
    <dbReference type="NCBI Taxonomy" id="7088"/>
</organismHost>
<name>Y059_NPVLD</name>
<organism>
    <name type="scientific">Lymantria dispar multicapsid nuclear polyhedrosis virus</name>
    <name type="common">LdMNPV</name>
    <dbReference type="NCBI Taxonomy" id="10449"/>
    <lineage>
        <taxon>Viruses</taxon>
        <taxon>Viruses incertae sedis</taxon>
        <taxon>Naldaviricetes</taxon>
        <taxon>Lefavirales</taxon>
        <taxon>Baculoviridae</taxon>
        <taxon>Alphabaculovirus</taxon>
        <taxon>Alphabaculovirus lydisparis</taxon>
    </lineage>
</organism>
<dbReference type="EMBL" id="U58676">
    <property type="protein sequence ID" value="AAC18644.1"/>
    <property type="molecule type" value="Genomic_DNA"/>
</dbReference>
<dbReference type="SMR" id="Q90177"/>
<dbReference type="InterPro" id="IPR009317">
    <property type="entry name" value="ChaB"/>
</dbReference>
<dbReference type="InterPro" id="IPR037205">
    <property type="entry name" value="ChaB_sf"/>
</dbReference>
<dbReference type="Pfam" id="PF06150">
    <property type="entry name" value="ChaB"/>
    <property type="match status" value="1"/>
</dbReference>
<dbReference type="SUPFAM" id="SSF140376">
    <property type="entry name" value="ChaB-like"/>
    <property type="match status" value="1"/>
</dbReference>